<name>MNMG_ACTP2</name>
<keyword id="KW-0963">Cytoplasm</keyword>
<keyword id="KW-0274">FAD</keyword>
<keyword id="KW-0285">Flavoprotein</keyword>
<keyword id="KW-0520">NAD</keyword>
<keyword id="KW-1185">Reference proteome</keyword>
<keyword id="KW-0819">tRNA processing</keyword>
<protein>
    <recommendedName>
        <fullName evidence="1">tRNA uridine 5-carboxymethylaminomethyl modification enzyme MnmG</fullName>
    </recommendedName>
    <alternativeName>
        <fullName evidence="1">Glucose-inhibited division protein A</fullName>
    </alternativeName>
</protein>
<sequence>MIYHEIYDVIVVGGGHAGTEAALAPARMGLKTLLLTHNVDTLGQMSCNPAIGGIGKGHLVKEIDAMGGLMAIAIDQAGIQFRTLNSSKGPAVRATRAQADRVLYRQAVRTALENQPNLDIFQQEVVDILVENNRAVGAVTKMGLTFKARSVVLTAGTFLAGKIHIGLDNYAGGRAGDPAATMLADRLRDLNLRVDRLKTGTPPRLDARTINFDVLAKQHGDAELPVMSFMGSVDLHPRQIPCHITHTNEQTHDLIRNSLDRSPMYTGIIEGIGPRYCPSIEDKVMRFSDRNSHQIYLEPEGLSTIEVYPNGISTSLPFDVQMGIVNSMKGLEKTRIIKPGYAIEYDYFDPRDLKPTLETKAIEGLFFAGQINGTTGYEEAAAQGLLAGINAALQVQGKEAWFPTRDLAYTGVLVDDLCTLGTKEPYRVFTSRAEYRLLLREDNADIRLTPIAHELGLIDDARWARFNQKMENIERERERLKQIWIHPQSEHLAVVNELVNSPLTREASGEDLLRRPEVTYDKLTQVAAFAPALDDKQAAEQVEISIKYQGYIEHQQNEIERHKRHENTLIPAEFDYDKVESLSNEVRAKLMQHRPVSIGQASRISGITPAAISILLVNLKKQGMLKRGEL</sequence>
<dbReference type="EMBL" id="CP000569">
    <property type="protein sequence ID" value="ABN74739.1"/>
    <property type="molecule type" value="Genomic_DNA"/>
</dbReference>
<dbReference type="RefSeq" id="WP_009874985.1">
    <property type="nucleotide sequence ID" value="NC_009053.1"/>
</dbReference>
<dbReference type="SMR" id="A3N2V3"/>
<dbReference type="STRING" id="416269.APL_1655"/>
<dbReference type="EnsemblBacteria" id="ABN74739">
    <property type="protein sequence ID" value="ABN74739"/>
    <property type="gene ID" value="APL_1655"/>
</dbReference>
<dbReference type="KEGG" id="apl:APL_1655"/>
<dbReference type="PATRIC" id="fig|416269.6.peg.1721"/>
<dbReference type="eggNOG" id="COG0445">
    <property type="taxonomic scope" value="Bacteria"/>
</dbReference>
<dbReference type="HOGENOM" id="CLU_007831_2_2_6"/>
<dbReference type="Proteomes" id="UP000001432">
    <property type="component" value="Chromosome"/>
</dbReference>
<dbReference type="GO" id="GO:0005829">
    <property type="term" value="C:cytosol"/>
    <property type="evidence" value="ECO:0007669"/>
    <property type="project" value="TreeGrafter"/>
</dbReference>
<dbReference type="GO" id="GO:0050660">
    <property type="term" value="F:flavin adenine dinucleotide binding"/>
    <property type="evidence" value="ECO:0007669"/>
    <property type="project" value="UniProtKB-UniRule"/>
</dbReference>
<dbReference type="GO" id="GO:0030488">
    <property type="term" value="P:tRNA methylation"/>
    <property type="evidence" value="ECO:0007669"/>
    <property type="project" value="TreeGrafter"/>
</dbReference>
<dbReference type="GO" id="GO:0002098">
    <property type="term" value="P:tRNA wobble uridine modification"/>
    <property type="evidence" value="ECO:0007669"/>
    <property type="project" value="InterPro"/>
</dbReference>
<dbReference type="FunFam" id="1.10.10.1800:FF:000001">
    <property type="entry name" value="tRNA uridine 5-carboxymethylaminomethyl modification enzyme MnmG"/>
    <property type="match status" value="1"/>
</dbReference>
<dbReference type="FunFam" id="1.10.150.570:FF:000001">
    <property type="entry name" value="tRNA uridine 5-carboxymethylaminomethyl modification enzyme MnmG"/>
    <property type="match status" value="1"/>
</dbReference>
<dbReference type="FunFam" id="3.50.50.60:FF:000002">
    <property type="entry name" value="tRNA uridine 5-carboxymethylaminomethyl modification enzyme MnmG"/>
    <property type="match status" value="1"/>
</dbReference>
<dbReference type="FunFam" id="3.50.50.60:FF:000010">
    <property type="entry name" value="tRNA uridine 5-carboxymethylaminomethyl modification enzyme MnmG"/>
    <property type="match status" value="1"/>
</dbReference>
<dbReference type="Gene3D" id="3.50.50.60">
    <property type="entry name" value="FAD/NAD(P)-binding domain"/>
    <property type="match status" value="2"/>
</dbReference>
<dbReference type="Gene3D" id="1.10.150.570">
    <property type="entry name" value="GidA associated domain, C-terminal subdomain"/>
    <property type="match status" value="1"/>
</dbReference>
<dbReference type="Gene3D" id="1.10.10.1800">
    <property type="entry name" value="tRNA uridine 5-carboxymethylaminomethyl modification enzyme MnmG/GidA"/>
    <property type="match status" value="1"/>
</dbReference>
<dbReference type="HAMAP" id="MF_00129">
    <property type="entry name" value="MnmG_GidA"/>
    <property type="match status" value="1"/>
</dbReference>
<dbReference type="InterPro" id="IPR036188">
    <property type="entry name" value="FAD/NAD-bd_sf"/>
</dbReference>
<dbReference type="InterPro" id="IPR049312">
    <property type="entry name" value="GIDA_C_N"/>
</dbReference>
<dbReference type="InterPro" id="IPR004416">
    <property type="entry name" value="MnmG"/>
</dbReference>
<dbReference type="InterPro" id="IPR002218">
    <property type="entry name" value="MnmG-rel"/>
</dbReference>
<dbReference type="InterPro" id="IPR020595">
    <property type="entry name" value="MnmG-rel_CS"/>
</dbReference>
<dbReference type="InterPro" id="IPR026904">
    <property type="entry name" value="MnmG_C"/>
</dbReference>
<dbReference type="InterPro" id="IPR047001">
    <property type="entry name" value="MnmG_C_subdom"/>
</dbReference>
<dbReference type="InterPro" id="IPR044920">
    <property type="entry name" value="MnmG_C_subdom_sf"/>
</dbReference>
<dbReference type="InterPro" id="IPR040131">
    <property type="entry name" value="MnmG_N"/>
</dbReference>
<dbReference type="NCBIfam" id="TIGR00136">
    <property type="entry name" value="mnmG_gidA"/>
    <property type="match status" value="1"/>
</dbReference>
<dbReference type="PANTHER" id="PTHR11806">
    <property type="entry name" value="GLUCOSE INHIBITED DIVISION PROTEIN A"/>
    <property type="match status" value="1"/>
</dbReference>
<dbReference type="PANTHER" id="PTHR11806:SF0">
    <property type="entry name" value="PROTEIN MTO1 HOMOLOG, MITOCHONDRIAL"/>
    <property type="match status" value="1"/>
</dbReference>
<dbReference type="Pfam" id="PF01134">
    <property type="entry name" value="GIDA"/>
    <property type="match status" value="1"/>
</dbReference>
<dbReference type="Pfam" id="PF21680">
    <property type="entry name" value="GIDA_C_1st"/>
    <property type="match status" value="1"/>
</dbReference>
<dbReference type="Pfam" id="PF13932">
    <property type="entry name" value="SAM_GIDA_C"/>
    <property type="match status" value="1"/>
</dbReference>
<dbReference type="SMART" id="SM01228">
    <property type="entry name" value="GIDA_assoc_3"/>
    <property type="match status" value="1"/>
</dbReference>
<dbReference type="SUPFAM" id="SSF51905">
    <property type="entry name" value="FAD/NAD(P)-binding domain"/>
    <property type="match status" value="1"/>
</dbReference>
<dbReference type="PROSITE" id="PS01280">
    <property type="entry name" value="GIDA_1"/>
    <property type="match status" value="1"/>
</dbReference>
<dbReference type="PROSITE" id="PS01281">
    <property type="entry name" value="GIDA_2"/>
    <property type="match status" value="1"/>
</dbReference>
<proteinExistence type="inferred from homology"/>
<accession>A3N2V3</accession>
<comment type="function">
    <text evidence="1">NAD-binding protein involved in the addition of a carboxymethylaminomethyl (cmnm) group at the wobble position (U34) of certain tRNAs, forming tRNA-cmnm(5)s(2)U34.</text>
</comment>
<comment type="cofactor">
    <cofactor evidence="1">
        <name>FAD</name>
        <dbReference type="ChEBI" id="CHEBI:57692"/>
    </cofactor>
</comment>
<comment type="subunit">
    <text evidence="1">Homodimer. Heterotetramer of two MnmE and two MnmG subunits.</text>
</comment>
<comment type="subcellular location">
    <subcellularLocation>
        <location evidence="1">Cytoplasm</location>
    </subcellularLocation>
</comment>
<comment type="similarity">
    <text evidence="1">Belongs to the MnmG family.</text>
</comment>
<gene>
    <name evidence="1" type="primary">mnmG</name>
    <name evidence="1" type="synonym">gidA</name>
    <name type="ordered locus">APL_1655</name>
</gene>
<feature type="chain" id="PRO_1000016539" description="tRNA uridine 5-carboxymethylaminomethyl modification enzyme MnmG">
    <location>
        <begin position="1"/>
        <end position="630"/>
    </location>
</feature>
<feature type="binding site" evidence="1">
    <location>
        <begin position="13"/>
        <end position="18"/>
    </location>
    <ligand>
        <name>FAD</name>
        <dbReference type="ChEBI" id="CHEBI:57692"/>
    </ligand>
</feature>
<feature type="binding site" evidence="1">
    <location>
        <begin position="273"/>
        <end position="287"/>
    </location>
    <ligand>
        <name>NAD(+)</name>
        <dbReference type="ChEBI" id="CHEBI:57540"/>
    </ligand>
</feature>
<reference key="1">
    <citation type="journal article" date="2008" name="J. Bacteriol.">
        <title>The complete genome sequence of Actinobacillus pleuropneumoniae L20 (serotype 5b).</title>
        <authorList>
            <person name="Foote S.J."/>
            <person name="Bosse J.T."/>
            <person name="Bouevitch A.B."/>
            <person name="Langford P.R."/>
            <person name="Young N.M."/>
            <person name="Nash J.H.E."/>
        </authorList>
    </citation>
    <scope>NUCLEOTIDE SEQUENCE [LARGE SCALE GENOMIC DNA]</scope>
    <source>
        <strain>L20</strain>
    </source>
</reference>
<organism>
    <name type="scientific">Actinobacillus pleuropneumoniae serotype 5b (strain L20)</name>
    <dbReference type="NCBI Taxonomy" id="416269"/>
    <lineage>
        <taxon>Bacteria</taxon>
        <taxon>Pseudomonadati</taxon>
        <taxon>Pseudomonadota</taxon>
        <taxon>Gammaproteobacteria</taxon>
        <taxon>Pasteurellales</taxon>
        <taxon>Pasteurellaceae</taxon>
        <taxon>Actinobacillus</taxon>
    </lineage>
</organism>
<evidence type="ECO:0000255" key="1">
    <source>
        <dbReference type="HAMAP-Rule" id="MF_00129"/>
    </source>
</evidence>